<reference key="1">
    <citation type="submission" date="2007-05" db="EMBL/GenBank/DDBJ databases">
        <title>Complete sequence of chromosome of Psychrobacter sp. PRwf-1.</title>
        <authorList>
            <consortium name="US DOE Joint Genome Institute"/>
            <person name="Copeland A."/>
            <person name="Lucas S."/>
            <person name="Lapidus A."/>
            <person name="Barry K."/>
            <person name="Detter J.C."/>
            <person name="Glavina del Rio T."/>
            <person name="Hammon N."/>
            <person name="Israni S."/>
            <person name="Dalin E."/>
            <person name="Tice H."/>
            <person name="Pitluck S."/>
            <person name="Chain P."/>
            <person name="Malfatti S."/>
            <person name="Shin M."/>
            <person name="Vergez L."/>
            <person name="Schmutz J."/>
            <person name="Larimer F."/>
            <person name="Land M."/>
            <person name="Hauser L."/>
            <person name="Kyrpides N."/>
            <person name="Kim E."/>
            <person name="Tiedje J."/>
            <person name="Richardson P."/>
        </authorList>
    </citation>
    <scope>NUCLEOTIDE SEQUENCE [LARGE SCALE GENOMIC DNA]</scope>
    <source>
        <strain>PRwf-1</strain>
    </source>
</reference>
<name>THIM_PSYWF</name>
<gene>
    <name evidence="1" type="primary">thiM</name>
    <name type="ordered locus">PsycPRwf_0830</name>
</gene>
<keyword id="KW-0067">ATP-binding</keyword>
<keyword id="KW-0418">Kinase</keyword>
<keyword id="KW-0460">Magnesium</keyword>
<keyword id="KW-0479">Metal-binding</keyword>
<keyword id="KW-0547">Nucleotide-binding</keyword>
<keyword id="KW-0784">Thiamine biosynthesis</keyword>
<keyword id="KW-0808">Transferase</keyword>
<evidence type="ECO:0000255" key="1">
    <source>
        <dbReference type="HAMAP-Rule" id="MF_00228"/>
    </source>
</evidence>
<proteinExistence type="inferred from homology"/>
<accession>A5WDP1</accession>
<comment type="function">
    <text evidence="1">Catalyzes the phosphorylation of the hydroxyl group of 4-methyl-5-beta-hydroxyethylthiazole (THZ).</text>
</comment>
<comment type="catalytic activity">
    <reaction evidence="1">
        <text>5-(2-hydroxyethyl)-4-methylthiazole + ATP = 4-methyl-5-(2-phosphooxyethyl)-thiazole + ADP + H(+)</text>
        <dbReference type="Rhea" id="RHEA:24212"/>
        <dbReference type="ChEBI" id="CHEBI:15378"/>
        <dbReference type="ChEBI" id="CHEBI:17957"/>
        <dbReference type="ChEBI" id="CHEBI:30616"/>
        <dbReference type="ChEBI" id="CHEBI:58296"/>
        <dbReference type="ChEBI" id="CHEBI:456216"/>
        <dbReference type="EC" id="2.7.1.50"/>
    </reaction>
</comment>
<comment type="cofactor">
    <cofactor evidence="1">
        <name>Mg(2+)</name>
        <dbReference type="ChEBI" id="CHEBI:18420"/>
    </cofactor>
</comment>
<comment type="pathway">
    <text evidence="1">Cofactor biosynthesis; thiamine diphosphate biosynthesis; 4-methyl-5-(2-phosphoethyl)-thiazole from 5-(2-hydroxyethyl)-4-methylthiazole: step 1/1.</text>
</comment>
<comment type="similarity">
    <text evidence="1">Belongs to the Thz kinase family.</text>
</comment>
<organism>
    <name type="scientific">Psychrobacter sp. (strain PRwf-1)</name>
    <dbReference type="NCBI Taxonomy" id="349106"/>
    <lineage>
        <taxon>Bacteria</taxon>
        <taxon>Pseudomonadati</taxon>
        <taxon>Pseudomonadota</taxon>
        <taxon>Gammaproteobacteria</taxon>
        <taxon>Moraxellales</taxon>
        <taxon>Moraxellaceae</taxon>
        <taxon>Psychrobacter</taxon>
    </lineage>
</organism>
<dbReference type="EC" id="2.7.1.50" evidence="1"/>
<dbReference type="EMBL" id="CP000713">
    <property type="protein sequence ID" value="ABQ93782.1"/>
    <property type="molecule type" value="Genomic_DNA"/>
</dbReference>
<dbReference type="SMR" id="A5WDP1"/>
<dbReference type="STRING" id="349106.PsycPRwf_0830"/>
<dbReference type="KEGG" id="prw:PsycPRwf_0830"/>
<dbReference type="eggNOG" id="COG2145">
    <property type="taxonomic scope" value="Bacteria"/>
</dbReference>
<dbReference type="HOGENOM" id="CLU_019943_0_1_6"/>
<dbReference type="UniPathway" id="UPA00060">
    <property type="reaction ID" value="UER00139"/>
</dbReference>
<dbReference type="GO" id="GO:0005829">
    <property type="term" value="C:cytosol"/>
    <property type="evidence" value="ECO:0007669"/>
    <property type="project" value="TreeGrafter"/>
</dbReference>
<dbReference type="GO" id="GO:0005524">
    <property type="term" value="F:ATP binding"/>
    <property type="evidence" value="ECO:0007669"/>
    <property type="project" value="UniProtKB-UniRule"/>
</dbReference>
<dbReference type="GO" id="GO:0004417">
    <property type="term" value="F:hydroxyethylthiazole kinase activity"/>
    <property type="evidence" value="ECO:0007669"/>
    <property type="project" value="UniProtKB-UniRule"/>
</dbReference>
<dbReference type="GO" id="GO:0008902">
    <property type="term" value="F:hydroxymethylpyrimidine kinase activity"/>
    <property type="evidence" value="ECO:0007669"/>
    <property type="project" value="TreeGrafter"/>
</dbReference>
<dbReference type="GO" id="GO:0000287">
    <property type="term" value="F:magnesium ion binding"/>
    <property type="evidence" value="ECO:0007669"/>
    <property type="project" value="UniProtKB-UniRule"/>
</dbReference>
<dbReference type="GO" id="GO:0008972">
    <property type="term" value="F:phosphomethylpyrimidine kinase activity"/>
    <property type="evidence" value="ECO:0007669"/>
    <property type="project" value="TreeGrafter"/>
</dbReference>
<dbReference type="GO" id="GO:0009228">
    <property type="term" value="P:thiamine biosynthetic process"/>
    <property type="evidence" value="ECO:0007669"/>
    <property type="project" value="UniProtKB-KW"/>
</dbReference>
<dbReference type="GO" id="GO:0009229">
    <property type="term" value="P:thiamine diphosphate biosynthetic process"/>
    <property type="evidence" value="ECO:0007669"/>
    <property type="project" value="UniProtKB-UniRule"/>
</dbReference>
<dbReference type="CDD" id="cd01170">
    <property type="entry name" value="THZ_kinase"/>
    <property type="match status" value="1"/>
</dbReference>
<dbReference type="Gene3D" id="3.40.1190.20">
    <property type="match status" value="1"/>
</dbReference>
<dbReference type="HAMAP" id="MF_00228">
    <property type="entry name" value="Thz_kinase"/>
    <property type="match status" value="1"/>
</dbReference>
<dbReference type="InterPro" id="IPR000417">
    <property type="entry name" value="Hyethyz_kinase"/>
</dbReference>
<dbReference type="InterPro" id="IPR029056">
    <property type="entry name" value="Ribokinase-like"/>
</dbReference>
<dbReference type="NCBIfam" id="NF006830">
    <property type="entry name" value="PRK09355.1"/>
    <property type="match status" value="1"/>
</dbReference>
<dbReference type="NCBIfam" id="TIGR00694">
    <property type="entry name" value="thiM"/>
    <property type="match status" value="1"/>
</dbReference>
<dbReference type="PANTHER" id="PTHR20858:SF17">
    <property type="entry name" value="HYDROXYMETHYLPYRIMIDINE_PHOSPHOMETHYLPYRIMIDINE KINASE THI20-RELATED"/>
    <property type="match status" value="1"/>
</dbReference>
<dbReference type="PANTHER" id="PTHR20858">
    <property type="entry name" value="PHOSPHOMETHYLPYRIMIDINE KINASE"/>
    <property type="match status" value="1"/>
</dbReference>
<dbReference type="Pfam" id="PF02110">
    <property type="entry name" value="HK"/>
    <property type="match status" value="1"/>
</dbReference>
<dbReference type="PIRSF" id="PIRSF000513">
    <property type="entry name" value="Thz_kinase"/>
    <property type="match status" value="1"/>
</dbReference>
<dbReference type="PRINTS" id="PR01099">
    <property type="entry name" value="HYETHTZKNASE"/>
</dbReference>
<dbReference type="SUPFAM" id="SSF53613">
    <property type="entry name" value="Ribokinase-like"/>
    <property type="match status" value="1"/>
</dbReference>
<protein>
    <recommendedName>
        <fullName evidence="1">Hydroxyethylthiazole kinase</fullName>
        <ecNumber evidence="1">2.7.1.50</ecNumber>
    </recommendedName>
    <alternativeName>
        <fullName evidence="1">4-methyl-5-beta-hydroxyethylthiazole kinase</fullName>
        <shortName evidence="1">TH kinase</shortName>
        <shortName evidence="1">Thz kinase</shortName>
    </alternativeName>
</protein>
<sequence length="266" mass="28243">MQLSFIESCFHAFKDQSALVHNLTNDVAHNTVANVLLACRASPAMVHDIQEAPDFVCLSDALAINIGTLTQTRLNSMLATAKMAHSKGIPWVLDPVAVGATAFRQQACRQLLSLQPDVIRGNASEILALAGMSSQSRGIDSGDSVAAAHAAAEALTQYAKVVVVTGEIDWVTDGMNRWAINHGHPMMTQVTAIGCALTALIAGFVGANKKAMAQAAVTALCYYGQAAEHAMQIAQGPGSFYIHFLDSLYALQATDVSQQARVTLYE</sequence>
<feature type="chain" id="PRO_1000071784" description="Hydroxyethylthiazole kinase">
    <location>
        <begin position="1"/>
        <end position="266"/>
    </location>
</feature>
<feature type="binding site" evidence="1">
    <location>
        <position position="45"/>
    </location>
    <ligand>
        <name>substrate</name>
    </ligand>
</feature>
<feature type="binding site" evidence="1">
    <location>
        <position position="120"/>
    </location>
    <ligand>
        <name>ATP</name>
        <dbReference type="ChEBI" id="CHEBI:30616"/>
    </ligand>
</feature>
<feature type="binding site" evidence="1">
    <location>
        <position position="165"/>
    </location>
    <ligand>
        <name>ATP</name>
        <dbReference type="ChEBI" id="CHEBI:30616"/>
    </ligand>
</feature>
<feature type="binding site" evidence="1">
    <location>
        <position position="192"/>
    </location>
    <ligand>
        <name>substrate</name>
    </ligand>
</feature>